<feature type="chain" id="PRO_0000057139" description="Nucleoside triphosphatase NudI">
    <location>
        <begin position="1"/>
        <end position="141"/>
    </location>
</feature>
<feature type="domain" description="Nudix hydrolase">
    <location>
        <begin position="1"/>
        <end position="141"/>
    </location>
</feature>
<feature type="short sequence motif" description="Nudix box">
    <location>
        <begin position="38"/>
        <end position="59"/>
    </location>
</feature>
<reference key="1">
    <citation type="journal article" date="1997" name="DNA Res.">
        <title>Construction of a contiguous 874-kb sequence of the Escherichia coli-K12 genome corresponding to 50.0-68.8 min on the linkage map and analysis of its sequence features.</title>
        <authorList>
            <person name="Yamamoto Y."/>
            <person name="Aiba H."/>
            <person name="Baba T."/>
            <person name="Hayashi K."/>
            <person name="Inada T."/>
            <person name="Isono K."/>
            <person name="Itoh T."/>
            <person name="Kimura S."/>
            <person name="Kitagawa M."/>
            <person name="Makino K."/>
            <person name="Miki T."/>
            <person name="Mitsuhashi N."/>
            <person name="Mizobuchi K."/>
            <person name="Mori H."/>
            <person name="Nakade S."/>
            <person name="Nakamura Y."/>
            <person name="Nashimoto H."/>
            <person name="Oshima T."/>
            <person name="Oyama S."/>
            <person name="Saito N."/>
            <person name="Sampei G."/>
            <person name="Satoh Y."/>
            <person name="Sivasundaram S."/>
            <person name="Tagami H."/>
            <person name="Takahashi H."/>
            <person name="Takeda J."/>
            <person name="Takemoto K."/>
            <person name="Uehara K."/>
            <person name="Wada C."/>
            <person name="Yamagata S."/>
            <person name="Horiuchi T."/>
        </authorList>
    </citation>
    <scope>NUCLEOTIDE SEQUENCE [LARGE SCALE GENOMIC DNA]</scope>
    <source>
        <strain>K12 / W3110 / ATCC 27325 / DSM 5911</strain>
    </source>
</reference>
<reference key="2">
    <citation type="journal article" date="1997" name="Science">
        <title>The complete genome sequence of Escherichia coli K-12.</title>
        <authorList>
            <person name="Blattner F.R."/>
            <person name="Plunkett G. III"/>
            <person name="Bloch C.A."/>
            <person name="Perna N.T."/>
            <person name="Burland V."/>
            <person name="Riley M."/>
            <person name="Collado-Vides J."/>
            <person name="Glasner J.D."/>
            <person name="Rode C.K."/>
            <person name="Mayhew G.F."/>
            <person name="Gregor J."/>
            <person name="Davis N.W."/>
            <person name="Kirkpatrick H.A."/>
            <person name="Goeden M.A."/>
            <person name="Rose D.J."/>
            <person name="Mau B."/>
            <person name="Shao Y."/>
        </authorList>
    </citation>
    <scope>NUCLEOTIDE SEQUENCE [LARGE SCALE GENOMIC DNA]</scope>
    <source>
        <strain>K12 / MG1655 / ATCC 47076</strain>
    </source>
</reference>
<reference key="3">
    <citation type="journal article" date="2006" name="Mol. Syst. Biol.">
        <title>Highly accurate genome sequences of Escherichia coli K-12 strains MG1655 and W3110.</title>
        <authorList>
            <person name="Hayashi K."/>
            <person name="Morooka N."/>
            <person name="Yamamoto Y."/>
            <person name="Fujita K."/>
            <person name="Isono K."/>
            <person name="Choi S."/>
            <person name="Ohtsubo E."/>
            <person name="Baba T."/>
            <person name="Wanner B.L."/>
            <person name="Mori H."/>
            <person name="Horiuchi T."/>
        </authorList>
    </citation>
    <scope>NUCLEOTIDE SEQUENCE [LARGE SCALE GENOMIC DNA]</scope>
    <source>
        <strain>K12 / W3110 / ATCC 27325 / DSM 5911</strain>
    </source>
</reference>
<reference key="4">
    <citation type="submission" date="1995-01" db="EMBL/GenBank/DDBJ databases">
        <title>Identification, sequencing and characterization of an aluminium-inducible Escherichia coli gene.</title>
        <authorList>
            <person name="Guzzo A."/>
            <person name="Macintyre G."/>
            <person name="Diorio C."/>
            <person name="Salmon K."/>
            <person name="Dubow M.S."/>
        </authorList>
    </citation>
    <scope>NUCLEOTIDE SEQUENCE [GENOMIC DNA] OF 61-141</scope>
    <source>
        <strain>K12</strain>
    </source>
</reference>
<reference key="5">
    <citation type="journal article" date="2006" name="J. Biol. Chem.">
        <title>Three new Nudix hydrolases from Escherichia coli.</title>
        <authorList>
            <person name="Xu W."/>
            <person name="Dunn C.A."/>
            <person name="O'Handley S.F."/>
            <person name="Smith D.L."/>
            <person name="Bessman M.J."/>
        </authorList>
    </citation>
    <scope>FUNCTION</scope>
    <scope>CATALYTIC ACTIVITY</scope>
    <scope>COFACTOR</scope>
    <scope>BIOPHYSICOCHEMICAL PROPERTIES</scope>
    <scope>SUBUNIT</scope>
    <source>
        <strain>K12 / MG1655 / ATCC 47076</strain>
    </source>
</reference>
<reference key="6">
    <citation type="journal article" date="2007" name="Acta Crystallogr. F">
        <title>Overexpression, crystallization and preliminary X-ray crystallographic analysis of Nudix hydrolase Orf141 from Escherichia coli K-1.</title>
        <authorList>
            <person name="Jung J."/>
            <person name="Ahn Y.-J."/>
            <person name="Kang L.-W."/>
        </authorList>
    </citation>
    <scope>CRYSTALLIZATION</scope>
    <source>
        <strain>K1</strain>
    </source>
</reference>
<keyword id="KW-0378">Hydrolase</keyword>
<keyword id="KW-0460">Magnesium</keyword>
<keyword id="KW-1185">Reference proteome</keyword>
<accession>P52006</accession>
<accession>P77305</accession>
<sequence length="141" mass="16371">MRQRTIVCPLIQNDGAYLLCKMADDRGVFPGQWAISGGGVEPGERIEEALRREIREELGEQLLLTEITPWTFSDDIRTKTYADGRKEEIYMIYLIFDCVSANREVKINEEFQDYAWVKPEDLVHYDLNVATRKTLRLKGLL</sequence>
<protein>
    <recommendedName>
        <fullName evidence="3">Nucleoside triphosphatase NudI</fullName>
        <ecNumber evidence="2">3.6.1.9</ecNumber>
    </recommendedName>
    <alternativeName>
        <fullName evidence="1">Nucleotide diphosphatase NudI</fullName>
    </alternativeName>
    <alternativeName>
        <fullName evidence="4">Pyrimidine deoxynucleoside triphosphate diphosphatase</fullName>
    </alternativeName>
    <alternativeName>
        <fullName>dCTP diphosphatase</fullName>
        <ecNumber evidence="2">3.6.1.12</ecNumber>
    </alternativeName>
    <alternativeName>
        <fullName>dTTP diphosphatase</fullName>
        <ecNumber evidence="2">3.6.1.-</ecNumber>
    </alternativeName>
    <alternativeName>
        <fullName>dUTP diphosphatase</fullName>
        <ecNumber evidence="2">3.6.1.23</ecNumber>
    </alternativeName>
</protein>
<organism>
    <name type="scientific">Escherichia coli (strain K12)</name>
    <dbReference type="NCBI Taxonomy" id="83333"/>
    <lineage>
        <taxon>Bacteria</taxon>
        <taxon>Pseudomonadati</taxon>
        <taxon>Pseudomonadota</taxon>
        <taxon>Gammaproteobacteria</taxon>
        <taxon>Enterobacterales</taxon>
        <taxon>Enterobacteriaceae</taxon>
        <taxon>Escherichia</taxon>
    </lineage>
</organism>
<dbReference type="EC" id="3.6.1.9" evidence="2"/>
<dbReference type="EC" id="3.6.1.12" evidence="2"/>
<dbReference type="EC" id="3.6.1.-" evidence="2"/>
<dbReference type="EC" id="3.6.1.23" evidence="2"/>
<dbReference type="EMBL" id="U00096">
    <property type="protein sequence ID" value="AAC75311.1"/>
    <property type="molecule type" value="Genomic_DNA"/>
</dbReference>
<dbReference type="EMBL" id="AP009048">
    <property type="protein sequence ID" value="BAA16074.1"/>
    <property type="molecule type" value="Genomic_DNA"/>
</dbReference>
<dbReference type="EMBL" id="X83874">
    <property type="status" value="NOT_ANNOTATED_CDS"/>
    <property type="molecule type" value="Genomic_DNA"/>
</dbReference>
<dbReference type="PIR" id="A64996">
    <property type="entry name" value="A64996"/>
</dbReference>
<dbReference type="RefSeq" id="NP_416754.1">
    <property type="nucleotide sequence ID" value="NC_000913.3"/>
</dbReference>
<dbReference type="RefSeq" id="WP_001300564.1">
    <property type="nucleotide sequence ID" value="NZ_LN832404.1"/>
</dbReference>
<dbReference type="SMR" id="P52006"/>
<dbReference type="BioGRID" id="4261215">
    <property type="interactions" value="20"/>
</dbReference>
<dbReference type="FunCoup" id="P52006">
    <property type="interactions" value="50"/>
</dbReference>
<dbReference type="IntAct" id="P52006">
    <property type="interactions" value="7"/>
</dbReference>
<dbReference type="STRING" id="511145.b2251"/>
<dbReference type="jPOST" id="P52006"/>
<dbReference type="PaxDb" id="511145-b2251"/>
<dbReference type="EnsemblBacteria" id="AAC75311">
    <property type="protein sequence ID" value="AAC75311"/>
    <property type="gene ID" value="b2251"/>
</dbReference>
<dbReference type="GeneID" id="946740"/>
<dbReference type="KEGG" id="ecj:JW2245"/>
<dbReference type="KEGG" id="eco:b2251"/>
<dbReference type="KEGG" id="ecoc:C3026_12575"/>
<dbReference type="PATRIC" id="fig|511145.12.peg.2343"/>
<dbReference type="EchoBASE" id="EB3060"/>
<dbReference type="eggNOG" id="COG0494">
    <property type="taxonomic scope" value="Bacteria"/>
</dbReference>
<dbReference type="HOGENOM" id="CLU_037162_31_0_6"/>
<dbReference type="InParanoid" id="P52006"/>
<dbReference type="OMA" id="EFDDYAW"/>
<dbReference type="OrthoDB" id="289720at2"/>
<dbReference type="PhylomeDB" id="P52006"/>
<dbReference type="BioCyc" id="EcoCyc:G7164-MONOMER"/>
<dbReference type="BioCyc" id="MetaCyc:G7164-MONOMER"/>
<dbReference type="PRO" id="PR:P52006"/>
<dbReference type="Proteomes" id="UP000000625">
    <property type="component" value="Chromosome"/>
</dbReference>
<dbReference type="GO" id="GO:0005737">
    <property type="term" value="C:cytoplasm"/>
    <property type="evidence" value="ECO:0000318"/>
    <property type="project" value="GO_Central"/>
</dbReference>
<dbReference type="GO" id="GO:0047840">
    <property type="term" value="F:dCTP diphosphatase activity"/>
    <property type="evidence" value="ECO:0000314"/>
    <property type="project" value="EcoCyc"/>
</dbReference>
<dbReference type="GO" id="GO:0036218">
    <property type="term" value="F:dTTP diphosphatase activity"/>
    <property type="evidence" value="ECO:0000314"/>
    <property type="project" value="EcoCyc"/>
</dbReference>
<dbReference type="GO" id="GO:0004170">
    <property type="term" value="F:dUTP diphosphatase activity"/>
    <property type="evidence" value="ECO:0000314"/>
    <property type="project" value="EcoCyc"/>
</dbReference>
<dbReference type="GO" id="GO:0016818">
    <property type="term" value="F:hydrolase activity, acting on acid anhydrides, in phosphorus-containing anhydrides"/>
    <property type="evidence" value="ECO:0000318"/>
    <property type="project" value="GO_Central"/>
</dbReference>
<dbReference type="GO" id="GO:0000287">
    <property type="term" value="F:magnesium ion binding"/>
    <property type="evidence" value="ECO:0007669"/>
    <property type="project" value="UniProtKB-UniRule"/>
</dbReference>
<dbReference type="FunFam" id="3.90.79.10:FF:000039">
    <property type="entry name" value="Nucleoside triphosphatase NudI"/>
    <property type="match status" value="1"/>
</dbReference>
<dbReference type="Gene3D" id="3.90.79.10">
    <property type="entry name" value="Nucleoside Triphosphate Pyrophosphohydrolase"/>
    <property type="match status" value="1"/>
</dbReference>
<dbReference type="HAMAP" id="MF_01846">
    <property type="entry name" value="Nudix_NudI"/>
    <property type="match status" value="1"/>
</dbReference>
<dbReference type="InterPro" id="IPR023781">
    <property type="entry name" value="Nucleoside_triphosphatase_NudI"/>
</dbReference>
<dbReference type="InterPro" id="IPR020476">
    <property type="entry name" value="Nudix_hydrolase"/>
</dbReference>
<dbReference type="InterPro" id="IPR015797">
    <property type="entry name" value="NUDIX_hydrolase-like_dom_sf"/>
</dbReference>
<dbReference type="InterPro" id="IPR020084">
    <property type="entry name" value="NUDIX_hydrolase_CS"/>
</dbReference>
<dbReference type="InterPro" id="IPR000086">
    <property type="entry name" value="NUDIX_hydrolase_dom"/>
</dbReference>
<dbReference type="NCBIfam" id="NF012016">
    <property type="entry name" value="PRK15472.1"/>
    <property type="match status" value="1"/>
</dbReference>
<dbReference type="PANTHER" id="PTHR43046">
    <property type="entry name" value="GDP-MANNOSE MANNOSYL HYDROLASE"/>
    <property type="match status" value="1"/>
</dbReference>
<dbReference type="PANTHER" id="PTHR43046:SF14">
    <property type="entry name" value="MUTT_NUDIX FAMILY PROTEIN"/>
    <property type="match status" value="1"/>
</dbReference>
<dbReference type="Pfam" id="PF00293">
    <property type="entry name" value="NUDIX"/>
    <property type="match status" value="1"/>
</dbReference>
<dbReference type="PRINTS" id="PR00502">
    <property type="entry name" value="NUDIXFAMILY"/>
</dbReference>
<dbReference type="SUPFAM" id="SSF55811">
    <property type="entry name" value="Nudix"/>
    <property type="match status" value="1"/>
</dbReference>
<dbReference type="PROSITE" id="PS51462">
    <property type="entry name" value="NUDIX"/>
    <property type="match status" value="1"/>
</dbReference>
<dbReference type="PROSITE" id="PS00893">
    <property type="entry name" value="NUDIX_BOX"/>
    <property type="match status" value="1"/>
</dbReference>
<name>NUDI_ECOLI</name>
<gene>
    <name type="primary">nudI</name>
    <name type="synonym">yfaO</name>
    <name type="ordered locus">b2251</name>
    <name type="ordered locus">JW2245</name>
</gene>
<comment type="function">
    <text evidence="2">Catalyzes the hydrolysis of nucleoside triphosphates, with a preference for pyrimidine deoxynucleoside triphosphates (dUTP, dTTP and dCTP).</text>
</comment>
<comment type="catalytic activity">
    <reaction evidence="2">
        <text>a ribonucleoside 5'-triphosphate + H2O = a ribonucleoside 5'-phosphate + diphosphate + H(+)</text>
        <dbReference type="Rhea" id="RHEA:23996"/>
        <dbReference type="ChEBI" id="CHEBI:15377"/>
        <dbReference type="ChEBI" id="CHEBI:15378"/>
        <dbReference type="ChEBI" id="CHEBI:33019"/>
        <dbReference type="ChEBI" id="CHEBI:58043"/>
        <dbReference type="ChEBI" id="CHEBI:61557"/>
        <dbReference type="EC" id="3.6.1.9"/>
    </reaction>
</comment>
<comment type="catalytic activity">
    <reaction evidence="2">
        <text>a 2'-deoxyribonucleoside 5'-triphosphate + H2O = a 2'-deoxyribonucleoside 5'-phosphate + diphosphate + H(+)</text>
        <dbReference type="Rhea" id="RHEA:44644"/>
        <dbReference type="ChEBI" id="CHEBI:15377"/>
        <dbReference type="ChEBI" id="CHEBI:15378"/>
        <dbReference type="ChEBI" id="CHEBI:33019"/>
        <dbReference type="ChEBI" id="CHEBI:61560"/>
        <dbReference type="ChEBI" id="CHEBI:65317"/>
        <dbReference type="EC" id="3.6.1.9"/>
    </reaction>
</comment>
<comment type="catalytic activity">
    <reaction evidence="2">
        <text>dUTP + H2O = dUMP + diphosphate + H(+)</text>
        <dbReference type="Rhea" id="RHEA:10248"/>
        <dbReference type="ChEBI" id="CHEBI:15377"/>
        <dbReference type="ChEBI" id="CHEBI:15378"/>
        <dbReference type="ChEBI" id="CHEBI:33019"/>
        <dbReference type="ChEBI" id="CHEBI:61555"/>
        <dbReference type="ChEBI" id="CHEBI:246422"/>
        <dbReference type="EC" id="3.6.1.9"/>
    </reaction>
</comment>
<comment type="catalytic activity">
    <reaction evidence="2">
        <text>dUTP + H2O = dUMP + diphosphate + H(+)</text>
        <dbReference type="Rhea" id="RHEA:10248"/>
        <dbReference type="ChEBI" id="CHEBI:15377"/>
        <dbReference type="ChEBI" id="CHEBI:15378"/>
        <dbReference type="ChEBI" id="CHEBI:33019"/>
        <dbReference type="ChEBI" id="CHEBI:61555"/>
        <dbReference type="ChEBI" id="CHEBI:246422"/>
        <dbReference type="EC" id="3.6.1.23"/>
    </reaction>
</comment>
<comment type="catalytic activity">
    <reaction evidence="2">
        <text>dTTP + H2O = dTMP + diphosphate + H(+)</text>
        <dbReference type="Rhea" id="RHEA:28534"/>
        <dbReference type="ChEBI" id="CHEBI:15377"/>
        <dbReference type="ChEBI" id="CHEBI:15378"/>
        <dbReference type="ChEBI" id="CHEBI:33019"/>
        <dbReference type="ChEBI" id="CHEBI:37568"/>
        <dbReference type="ChEBI" id="CHEBI:63528"/>
        <dbReference type="EC" id="3.6.1.9"/>
    </reaction>
</comment>
<comment type="catalytic activity">
    <reaction evidence="2">
        <text>dCTP + H2O = dCMP + diphosphate + H(+)</text>
        <dbReference type="Rhea" id="RHEA:22636"/>
        <dbReference type="ChEBI" id="CHEBI:15377"/>
        <dbReference type="ChEBI" id="CHEBI:15378"/>
        <dbReference type="ChEBI" id="CHEBI:33019"/>
        <dbReference type="ChEBI" id="CHEBI:57566"/>
        <dbReference type="ChEBI" id="CHEBI:61481"/>
        <dbReference type="EC" id="3.6.1.9"/>
    </reaction>
</comment>
<comment type="catalytic activity">
    <reaction evidence="2">
        <text>dCTP + H2O = dCMP + diphosphate + H(+)</text>
        <dbReference type="Rhea" id="RHEA:22636"/>
        <dbReference type="ChEBI" id="CHEBI:15377"/>
        <dbReference type="ChEBI" id="CHEBI:15378"/>
        <dbReference type="ChEBI" id="CHEBI:33019"/>
        <dbReference type="ChEBI" id="CHEBI:57566"/>
        <dbReference type="ChEBI" id="CHEBI:61481"/>
        <dbReference type="EC" id="3.6.1.12"/>
    </reaction>
</comment>
<comment type="cofactor">
    <cofactor evidence="2">
        <name>Mg(2+)</name>
        <dbReference type="ChEBI" id="CHEBI:18420"/>
    </cofactor>
</comment>
<comment type="biophysicochemical properties">
    <kinetics>
        <KM evidence="2">2.2 mM for dUTP</KM>
        <KM evidence="2">1.3 mM for dTTP</KM>
        <Vmax evidence="2">81.0 umol/min/mg enzyme with dUTP as substrate</Vmax>
        <Vmax evidence="2">56.0 umol/min/mg enzyme with dTTP as substrate</Vmax>
        <text evidence="2">kcat is 21 sec(-1) with dUTP as substrate, and 15 sec(-1) with dTTP as substrate.</text>
    </kinetics>
    <phDependence>
        <text evidence="2">Optimum pH is about 8.5.</text>
    </phDependence>
</comment>
<comment type="subunit">
    <text evidence="2">Monomer.</text>
</comment>
<comment type="similarity">
    <text evidence="4">Belongs to the Nudix hydrolase family. NudI subfamily.</text>
</comment>
<evidence type="ECO:0000255" key="1">
    <source>
        <dbReference type="HAMAP-Rule" id="MF_01846"/>
    </source>
</evidence>
<evidence type="ECO:0000269" key="2">
    <source>
    </source>
</evidence>
<evidence type="ECO:0000303" key="3">
    <source>
    </source>
</evidence>
<evidence type="ECO:0000305" key="4"/>
<proteinExistence type="evidence at protein level"/>